<proteinExistence type="inferred from homology"/>
<dbReference type="EC" id="2.4.2.22" evidence="1"/>
<dbReference type="EMBL" id="AF327738">
    <property type="protein sequence ID" value="AAK18822.1"/>
    <property type="molecule type" value="Genomic_DNA"/>
</dbReference>
<dbReference type="SMR" id="Q9AGS1"/>
<dbReference type="UniPathway" id="UPA00602">
    <property type="reaction ID" value="UER00658"/>
</dbReference>
<dbReference type="GO" id="GO:0005737">
    <property type="term" value="C:cytoplasm"/>
    <property type="evidence" value="ECO:0007669"/>
    <property type="project" value="UniProtKB-SubCell"/>
</dbReference>
<dbReference type="GO" id="GO:0000310">
    <property type="term" value="F:xanthine phosphoribosyltransferase activity"/>
    <property type="evidence" value="ECO:0007669"/>
    <property type="project" value="UniProtKB-UniRule"/>
</dbReference>
<dbReference type="GO" id="GO:0006166">
    <property type="term" value="P:purine ribonucleoside salvage"/>
    <property type="evidence" value="ECO:0007669"/>
    <property type="project" value="UniProtKB-KW"/>
</dbReference>
<dbReference type="GO" id="GO:0046110">
    <property type="term" value="P:xanthine metabolic process"/>
    <property type="evidence" value="ECO:0007669"/>
    <property type="project" value="InterPro"/>
</dbReference>
<dbReference type="GO" id="GO:0032265">
    <property type="term" value="P:XMP salvage"/>
    <property type="evidence" value="ECO:0007669"/>
    <property type="project" value="UniProtKB-UniRule"/>
</dbReference>
<dbReference type="CDD" id="cd06223">
    <property type="entry name" value="PRTases_typeI"/>
    <property type="match status" value="1"/>
</dbReference>
<dbReference type="Gene3D" id="3.40.50.2020">
    <property type="match status" value="1"/>
</dbReference>
<dbReference type="HAMAP" id="MF_01184">
    <property type="entry name" value="XPRTase"/>
    <property type="match status" value="1"/>
</dbReference>
<dbReference type="InterPro" id="IPR000836">
    <property type="entry name" value="PRibTrfase_dom"/>
</dbReference>
<dbReference type="InterPro" id="IPR029057">
    <property type="entry name" value="PRTase-like"/>
</dbReference>
<dbReference type="InterPro" id="IPR050118">
    <property type="entry name" value="Pur/Pyrimidine_PRTase"/>
</dbReference>
<dbReference type="InterPro" id="IPR010079">
    <property type="entry name" value="Xanthine_PRibTrfase"/>
</dbReference>
<dbReference type="NCBIfam" id="NF006671">
    <property type="entry name" value="PRK09219.1"/>
    <property type="match status" value="1"/>
</dbReference>
<dbReference type="NCBIfam" id="TIGR01744">
    <property type="entry name" value="XPRTase"/>
    <property type="match status" value="1"/>
</dbReference>
<dbReference type="PANTHER" id="PTHR43864">
    <property type="entry name" value="HYPOXANTHINE/GUANINE PHOSPHORIBOSYLTRANSFERASE"/>
    <property type="match status" value="1"/>
</dbReference>
<dbReference type="PANTHER" id="PTHR43864:SF1">
    <property type="entry name" value="XANTHINE PHOSPHORIBOSYLTRANSFERASE"/>
    <property type="match status" value="1"/>
</dbReference>
<dbReference type="Pfam" id="PF00156">
    <property type="entry name" value="Pribosyltran"/>
    <property type="match status" value="1"/>
</dbReference>
<dbReference type="SUPFAM" id="SSF53271">
    <property type="entry name" value="PRTase-like"/>
    <property type="match status" value="1"/>
</dbReference>
<evidence type="ECO:0000255" key="1">
    <source>
        <dbReference type="HAMAP-Rule" id="MF_01184"/>
    </source>
</evidence>
<protein>
    <recommendedName>
        <fullName evidence="1">Xanthine phosphoribosyltransferase</fullName>
        <shortName evidence="1">XPRTase</shortName>
        <ecNumber evidence="1">2.4.2.22</ecNumber>
    </recommendedName>
</protein>
<name>XPT_STRTR</name>
<sequence>MKLLEDRILNDGDVLGENILKLTFLTHQVDFELMREIGKVFAEKFKDTGITKVVAIEASGIAPALYATEALDVPMIFAKKAKNITMNEGILTAEVYSFTKQVTSTVSIASKFLTPEDKVLIVDDFLANGQAAKGLIQIIEEAGAHVEAVGIVIEKSFQDGRALLEEASYPVVSLARLERFENGQVVFKEADI</sequence>
<organism>
    <name type="scientific">Streptococcus thermophilus</name>
    <dbReference type="NCBI Taxonomy" id="1308"/>
    <lineage>
        <taxon>Bacteria</taxon>
        <taxon>Bacillati</taxon>
        <taxon>Bacillota</taxon>
        <taxon>Bacilli</taxon>
        <taxon>Lactobacillales</taxon>
        <taxon>Streptococcaceae</taxon>
        <taxon>Streptococcus</taxon>
    </lineage>
</organism>
<keyword id="KW-0963">Cytoplasm</keyword>
<keyword id="KW-0328">Glycosyltransferase</keyword>
<keyword id="KW-0660">Purine salvage</keyword>
<keyword id="KW-0808">Transferase</keyword>
<reference key="1">
    <citation type="submission" date="2000-12" db="EMBL/GenBank/DDBJ databases">
        <title>Isolation and sequence analysis of two component systems from Streptococcus thermophilus.</title>
        <authorList>
            <person name="Crispie F."/>
            <person name="Morel P."/>
            <person name="Ehrlich D.S."/>
            <person name="Fitzgerald G.F."/>
            <person name="van Sinderen D."/>
        </authorList>
    </citation>
    <scope>NUCLEOTIDE SEQUENCE [GENOMIC DNA]</scope>
    <source>
        <strain>CNRZ 1205</strain>
    </source>
</reference>
<comment type="function">
    <text evidence="1">Converts the preformed base xanthine, a product of nucleic acid breakdown, to xanthosine 5'-monophosphate (XMP), so it can be reused for RNA or DNA synthesis.</text>
</comment>
<comment type="catalytic activity">
    <reaction evidence="1">
        <text>XMP + diphosphate = xanthine + 5-phospho-alpha-D-ribose 1-diphosphate</text>
        <dbReference type="Rhea" id="RHEA:10800"/>
        <dbReference type="ChEBI" id="CHEBI:17712"/>
        <dbReference type="ChEBI" id="CHEBI:33019"/>
        <dbReference type="ChEBI" id="CHEBI:57464"/>
        <dbReference type="ChEBI" id="CHEBI:58017"/>
        <dbReference type="EC" id="2.4.2.22"/>
    </reaction>
</comment>
<comment type="pathway">
    <text evidence="1">Purine metabolism; XMP biosynthesis via salvage pathway; XMP from xanthine: step 1/1.</text>
</comment>
<comment type="subunit">
    <text evidence="1">Homodimer.</text>
</comment>
<comment type="subcellular location">
    <subcellularLocation>
        <location evidence="1">Cytoplasm</location>
    </subcellularLocation>
</comment>
<comment type="similarity">
    <text evidence="1">Belongs to the purine/pyrimidine phosphoribosyltransferase family. Xpt subfamily.</text>
</comment>
<feature type="chain" id="PRO_0000339777" description="Xanthine phosphoribosyltransferase">
    <location>
        <begin position="1"/>
        <end position="192"/>
    </location>
</feature>
<feature type="binding site" evidence="1">
    <location>
        <position position="20"/>
    </location>
    <ligand>
        <name>xanthine</name>
        <dbReference type="ChEBI" id="CHEBI:17712"/>
    </ligand>
</feature>
<feature type="binding site" evidence="1">
    <location>
        <position position="26"/>
    </location>
    <ligand>
        <name>xanthine</name>
        <dbReference type="ChEBI" id="CHEBI:17712"/>
    </ligand>
</feature>
<feature type="binding site" evidence="1">
    <location>
        <begin position="127"/>
        <end position="131"/>
    </location>
    <ligand>
        <name>5-phospho-alpha-D-ribose 1-diphosphate</name>
        <dbReference type="ChEBI" id="CHEBI:58017"/>
    </ligand>
</feature>
<feature type="binding site" evidence="1">
    <location>
        <position position="155"/>
    </location>
    <ligand>
        <name>xanthine</name>
        <dbReference type="ChEBI" id="CHEBI:17712"/>
    </ligand>
</feature>
<accession>Q9AGS1</accession>
<gene>
    <name evidence="1" type="primary">xpt</name>
</gene>